<feature type="chain" id="PRO_1000165461" description="Small ribosomal subunit protein uS5">
    <location>
        <begin position="1"/>
        <end position="189"/>
    </location>
</feature>
<feature type="domain" description="S5 DRBM" evidence="1">
    <location>
        <begin position="22"/>
        <end position="85"/>
    </location>
</feature>
<evidence type="ECO:0000255" key="1">
    <source>
        <dbReference type="HAMAP-Rule" id="MF_01307"/>
    </source>
</evidence>
<evidence type="ECO:0000305" key="2"/>
<protein>
    <recommendedName>
        <fullName evidence="1">Small ribosomal subunit protein uS5</fullName>
    </recommendedName>
    <alternativeName>
        <fullName evidence="2">30S ribosomal protein S5</fullName>
    </alternativeName>
</protein>
<keyword id="KW-1185">Reference proteome</keyword>
<keyword id="KW-0687">Ribonucleoprotein</keyword>
<keyword id="KW-0689">Ribosomal protein</keyword>
<keyword id="KW-0694">RNA-binding</keyword>
<keyword id="KW-0699">rRNA-binding</keyword>
<reference key="1">
    <citation type="journal article" date="2009" name="Appl. Environ. Microbiol.">
        <title>Rhizobium sp. strain NGR234 possesses a remarkable number of secretion systems.</title>
        <authorList>
            <person name="Schmeisser C."/>
            <person name="Liesegang H."/>
            <person name="Krysciak D."/>
            <person name="Bakkou N."/>
            <person name="Le Quere A."/>
            <person name="Wollherr A."/>
            <person name="Heinemeyer I."/>
            <person name="Morgenstern B."/>
            <person name="Pommerening-Roeser A."/>
            <person name="Flores M."/>
            <person name="Palacios R."/>
            <person name="Brenner S."/>
            <person name="Gottschalk G."/>
            <person name="Schmitz R.A."/>
            <person name="Broughton W.J."/>
            <person name="Perret X."/>
            <person name="Strittmatter A.W."/>
            <person name="Streit W.R."/>
        </authorList>
    </citation>
    <scope>NUCLEOTIDE SEQUENCE [LARGE SCALE GENOMIC DNA]</scope>
    <source>
        <strain>NBRC 101917 / NGR234</strain>
    </source>
</reference>
<name>RS5_SINFN</name>
<accession>C3MAZ7</accession>
<organism>
    <name type="scientific">Sinorhizobium fredii (strain NBRC 101917 / NGR234)</name>
    <dbReference type="NCBI Taxonomy" id="394"/>
    <lineage>
        <taxon>Bacteria</taxon>
        <taxon>Pseudomonadati</taxon>
        <taxon>Pseudomonadota</taxon>
        <taxon>Alphaproteobacteria</taxon>
        <taxon>Hyphomicrobiales</taxon>
        <taxon>Rhizobiaceae</taxon>
        <taxon>Sinorhizobium/Ensifer group</taxon>
        <taxon>Sinorhizobium</taxon>
    </lineage>
</organism>
<gene>
    <name evidence="1" type="primary">rpsE</name>
    <name type="ordered locus">NGR_c12080</name>
</gene>
<comment type="function">
    <text evidence="1">With S4 and S12 plays an important role in translational accuracy.</text>
</comment>
<comment type="function">
    <text evidence="1">Located at the back of the 30S subunit body where it stabilizes the conformation of the head with respect to the body.</text>
</comment>
<comment type="subunit">
    <text evidence="1">Part of the 30S ribosomal subunit. Contacts proteins S4 and S8.</text>
</comment>
<comment type="domain">
    <text>The N-terminal domain interacts with the head of the 30S subunit; the C-terminal domain interacts with the body and contacts protein S4. The interaction surface between S4 and S5 is involved in control of translational fidelity.</text>
</comment>
<comment type="similarity">
    <text evidence="1">Belongs to the universal ribosomal protein uS5 family.</text>
</comment>
<sequence length="189" mass="20465">MAQERRGSREDRQNREERDSEFVDKLVAINRVAKVVKGGRRFGFAALVVVGDQKGRVGFGHGKAREVPEAIRKATEAAKRDLIFVPLRGGRTLHHDVNGRHGAGKVLLRSAKAGTGIIAGGPMRAVFETLGVHDVVAKSTGSSNPYNMVRATFDALKNQMHPKDIAAQRGMKYATLQARRVAAGAASEE</sequence>
<dbReference type="EMBL" id="CP001389">
    <property type="protein sequence ID" value="ACP24990.1"/>
    <property type="molecule type" value="Genomic_DNA"/>
</dbReference>
<dbReference type="RefSeq" id="WP_012707768.1">
    <property type="nucleotide sequence ID" value="NC_012587.1"/>
</dbReference>
<dbReference type="RefSeq" id="YP_002825743.1">
    <property type="nucleotide sequence ID" value="NC_012587.1"/>
</dbReference>
<dbReference type="SMR" id="C3MAZ7"/>
<dbReference type="STRING" id="394.NGR_c12080"/>
<dbReference type="KEGG" id="rhi:NGR_c12080"/>
<dbReference type="PATRIC" id="fig|394.7.peg.4024"/>
<dbReference type="eggNOG" id="COG0098">
    <property type="taxonomic scope" value="Bacteria"/>
</dbReference>
<dbReference type="HOGENOM" id="CLU_065898_2_2_5"/>
<dbReference type="OrthoDB" id="9809045at2"/>
<dbReference type="Proteomes" id="UP000001054">
    <property type="component" value="Chromosome"/>
</dbReference>
<dbReference type="GO" id="GO:0015935">
    <property type="term" value="C:small ribosomal subunit"/>
    <property type="evidence" value="ECO:0007669"/>
    <property type="project" value="InterPro"/>
</dbReference>
<dbReference type="GO" id="GO:0019843">
    <property type="term" value="F:rRNA binding"/>
    <property type="evidence" value="ECO:0007669"/>
    <property type="project" value="UniProtKB-UniRule"/>
</dbReference>
<dbReference type="GO" id="GO:0003735">
    <property type="term" value="F:structural constituent of ribosome"/>
    <property type="evidence" value="ECO:0007669"/>
    <property type="project" value="InterPro"/>
</dbReference>
<dbReference type="GO" id="GO:0006412">
    <property type="term" value="P:translation"/>
    <property type="evidence" value="ECO:0007669"/>
    <property type="project" value="UniProtKB-UniRule"/>
</dbReference>
<dbReference type="FunFam" id="3.30.160.20:FF:000001">
    <property type="entry name" value="30S ribosomal protein S5"/>
    <property type="match status" value="1"/>
</dbReference>
<dbReference type="FunFam" id="3.30.230.10:FF:000002">
    <property type="entry name" value="30S ribosomal protein S5"/>
    <property type="match status" value="1"/>
</dbReference>
<dbReference type="Gene3D" id="3.30.160.20">
    <property type="match status" value="1"/>
</dbReference>
<dbReference type="Gene3D" id="3.30.230.10">
    <property type="match status" value="1"/>
</dbReference>
<dbReference type="HAMAP" id="MF_01307_B">
    <property type="entry name" value="Ribosomal_uS5_B"/>
    <property type="match status" value="1"/>
</dbReference>
<dbReference type="InterPro" id="IPR020568">
    <property type="entry name" value="Ribosomal_Su5_D2-typ_SF"/>
</dbReference>
<dbReference type="InterPro" id="IPR000851">
    <property type="entry name" value="Ribosomal_uS5"/>
</dbReference>
<dbReference type="InterPro" id="IPR005712">
    <property type="entry name" value="Ribosomal_uS5_bac-type"/>
</dbReference>
<dbReference type="InterPro" id="IPR005324">
    <property type="entry name" value="Ribosomal_uS5_C"/>
</dbReference>
<dbReference type="InterPro" id="IPR013810">
    <property type="entry name" value="Ribosomal_uS5_N"/>
</dbReference>
<dbReference type="InterPro" id="IPR018192">
    <property type="entry name" value="Ribosomal_uS5_N_CS"/>
</dbReference>
<dbReference type="InterPro" id="IPR014721">
    <property type="entry name" value="Ribsml_uS5_D2-typ_fold_subgr"/>
</dbReference>
<dbReference type="NCBIfam" id="TIGR01021">
    <property type="entry name" value="rpsE_bact"/>
    <property type="match status" value="1"/>
</dbReference>
<dbReference type="PANTHER" id="PTHR48277">
    <property type="entry name" value="MITOCHONDRIAL RIBOSOMAL PROTEIN S5"/>
    <property type="match status" value="1"/>
</dbReference>
<dbReference type="PANTHER" id="PTHR48277:SF1">
    <property type="entry name" value="MITOCHONDRIAL RIBOSOMAL PROTEIN S5"/>
    <property type="match status" value="1"/>
</dbReference>
<dbReference type="Pfam" id="PF00333">
    <property type="entry name" value="Ribosomal_S5"/>
    <property type="match status" value="1"/>
</dbReference>
<dbReference type="Pfam" id="PF03719">
    <property type="entry name" value="Ribosomal_S5_C"/>
    <property type="match status" value="1"/>
</dbReference>
<dbReference type="SUPFAM" id="SSF54768">
    <property type="entry name" value="dsRNA-binding domain-like"/>
    <property type="match status" value="1"/>
</dbReference>
<dbReference type="SUPFAM" id="SSF54211">
    <property type="entry name" value="Ribosomal protein S5 domain 2-like"/>
    <property type="match status" value="1"/>
</dbReference>
<dbReference type="PROSITE" id="PS00585">
    <property type="entry name" value="RIBOSOMAL_S5"/>
    <property type="match status" value="1"/>
</dbReference>
<dbReference type="PROSITE" id="PS50881">
    <property type="entry name" value="S5_DSRBD"/>
    <property type="match status" value="1"/>
</dbReference>
<proteinExistence type="inferred from homology"/>